<reference key="1">
    <citation type="journal article" date="2009" name="PLoS ONE">
        <title>Non mycobacterial virulence genes in the genome of the emerging pathogen Mycobacterium abscessus.</title>
        <authorList>
            <person name="Ripoll F."/>
            <person name="Pasek S."/>
            <person name="Schenowitz C."/>
            <person name="Dossat C."/>
            <person name="Barbe V."/>
            <person name="Rottman M."/>
            <person name="Macheras E."/>
            <person name="Heym B."/>
            <person name="Herrmann J.L."/>
            <person name="Daffe M."/>
            <person name="Brosch R."/>
            <person name="Risler J.L."/>
            <person name="Gaillard J.L."/>
        </authorList>
    </citation>
    <scope>NUCLEOTIDE SEQUENCE [LARGE SCALE GENOMIC DNA]</scope>
    <source>
        <strain>ATCC 19977 / DSM 44196 / CCUG 20993 / CIP 104536 / JCM 13569 / NCTC 13031 / TMC 1543 / L948</strain>
    </source>
</reference>
<dbReference type="EC" id="4.2.1.10" evidence="1"/>
<dbReference type="EMBL" id="CU458896">
    <property type="protein sequence ID" value="CAM62919.1"/>
    <property type="molecule type" value="Genomic_DNA"/>
</dbReference>
<dbReference type="RefSeq" id="WP_005057656.1">
    <property type="nucleotide sequence ID" value="NZ_MLCG01000003.1"/>
</dbReference>
<dbReference type="SMR" id="B1MCE8"/>
<dbReference type="GeneID" id="93379771"/>
<dbReference type="KEGG" id="mab:MAB_2840c"/>
<dbReference type="UniPathway" id="UPA00053">
    <property type="reaction ID" value="UER00086"/>
</dbReference>
<dbReference type="Proteomes" id="UP000007137">
    <property type="component" value="Chromosome"/>
</dbReference>
<dbReference type="GO" id="GO:0003855">
    <property type="term" value="F:3-dehydroquinate dehydratase activity"/>
    <property type="evidence" value="ECO:0007669"/>
    <property type="project" value="UniProtKB-UniRule"/>
</dbReference>
<dbReference type="GO" id="GO:0008652">
    <property type="term" value="P:amino acid biosynthetic process"/>
    <property type="evidence" value="ECO:0007669"/>
    <property type="project" value="UniProtKB-KW"/>
</dbReference>
<dbReference type="GO" id="GO:0009073">
    <property type="term" value="P:aromatic amino acid family biosynthetic process"/>
    <property type="evidence" value="ECO:0007669"/>
    <property type="project" value="UniProtKB-KW"/>
</dbReference>
<dbReference type="GO" id="GO:0009423">
    <property type="term" value="P:chorismate biosynthetic process"/>
    <property type="evidence" value="ECO:0007669"/>
    <property type="project" value="UniProtKB-UniRule"/>
</dbReference>
<dbReference type="GO" id="GO:0019631">
    <property type="term" value="P:quinate catabolic process"/>
    <property type="evidence" value="ECO:0007669"/>
    <property type="project" value="TreeGrafter"/>
</dbReference>
<dbReference type="CDD" id="cd00466">
    <property type="entry name" value="DHQase_II"/>
    <property type="match status" value="1"/>
</dbReference>
<dbReference type="Gene3D" id="3.40.50.9100">
    <property type="entry name" value="Dehydroquinase, class II"/>
    <property type="match status" value="1"/>
</dbReference>
<dbReference type="HAMAP" id="MF_00169">
    <property type="entry name" value="AroQ"/>
    <property type="match status" value="1"/>
</dbReference>
<dbReference type="InterPro" id="IPR001874">
    <property type="entry name" value="DHquinase_II"/>
</dbReference>
<dbReference type="InterPro" id="IPR018509">
    <property type="entry name" value="DHquinase_II_CS"/>
</dbReference>
<dbReference type="InterPro" id="IPR036441">
    <property type="entry name" value="DHquinase_II_sf"/>
</dbReference>
<dbReference type="NCBIfam" id="TIGR01088">
    <property type="entry name" value="aroQ"/>
    <property type="match status" value="1"/>
</dbReference>
<dbReference type="NCBIfam" id="NF003805">
    <property type="entry name" value="PRK05395.1-2"/>
    <property type="match status" value="1"/>
</dbReference>
<dbReference type="NCBIfam" id="NF003806">
    <property type="entry name" value="PRK05395.1-3"/>
    <property type="match status" value="1"/>
</dbReference>
<dbReference type="NCBIfam" id="NF003807">
    <property type="entry name" value="PRK05395.1-4"/>
    <property type="match status" value="1"/>
</dbReference>
<dbReference type="PANTHER" id="PTHR21272">
    <property type="entry name" value="CATABOLIC 3-DEHYDROQUINASE"/>
    <property type="match status" value="1"/>
</dbReference>
<dbReference type="PANTHER" id="PTHR21272:SF3">
    <property type="entry name" value="CATABOLIC 3-DEHYDROQUINASE"/>
    <property type="match status" value="1"/>
</dbReference>
<dbReference type="Pfam" id="PF01220">
    <property type="entry name" value="DHquinase_II"/>
    <property type="match status" value="1"/>
</dbReference>
<dbReference type="PIRSF" id="PIRSF001399">
    <property type="entry name" value="DHquinase_II"/>
    <property type="match status" value="1"/>
</dbReference>
<dbReference type="SUPFAM" id="SSF52304">
    <property type="entry name" value="Type II 3-dehydroquinate dehydratase"/>
    <property type="match status" value="1"/>
</dbReference>
<dbReference type="PROSITE" id="PS01029">
    <property type="entry name" value="DEHYDROQUINASE_II"/>
    <property type="match status" value="1"/>
</dbReference>
<comment type="function">
    <text evidence="1">Catalyzes a trans-dehydration via an enolate intermediate.</text>
</comment>
<comment type="catalytic activity">
    <reaction evidence="1">
        <text>3-dehydroquinate = 3-dehydroshikimate + H2O</text>
        <dbReference type="Rhea" id="RHEA:21096"/>
        <dbReference type="ChEBI" id="CHEBI:15377"/>
        <dbReference type="ChEBI" id="CHEBI:16630"/>
        <dbReference type="ChEBI" id="CHEBI:32364"/>
        <dbReference type="EC" id="4.2.1.10"/>
    </reaction>
</comment>
<comment type="pathway">
    <text evidence="1">Metabolic intermediate biosynthesis; chorismate biosynthesis; chorismate from D-erythrose 4-phosphate and phosphoenolpyruvate: step 3/7.</text>
</comment>
<comment type="subunit">
    <text evidence="1">Homododecamer.</text>
</comment>
<comment type="similarity">
    <text evidence="1">Belongs to the type-II 3-dehydroquinase family.</text>
</comment>
<feature type="chain" id="PRO_1000097609" description="3-dehydroquinate dehydratase">
    <location>
        <begin position="1"/>
        <end position="144"/>
    </location>
</feature>
<feature type="active site" description="Proton acceptor" evidence="1">
    <location>
        <position position="22"/>
    </location>
</feature>
<feature type="active site" description="Proton donor" evidence="1">
    <location>
        <position position="99"/>
    </location>
</feature>
<feature type="binding site" evidence="1">
    <location>
        <position position="73"/>
    </location>
    <ligand>
        <name>substrate</name>
    </ligand>
</feature>
<feature type="binding site" evidence="1">
    <location>
        <position position="79"/>
    </location>
    <ligand>
        <name>substrate</name>
    </ligand>
</feature>
<feature type="binding site" evidence="1">
    <location>
        <position position="86"/>
    </location>
    <ligand>
        <name>substrate</name>
    </ligand>
</feature>
<feature type="binding site" evidence="1">
    <location>
        <begin position="100"/>
        <end position="101"/>
    </location>
    <ligand>
        <name>substrate</name>
    </ligand>
</feature>
<feature type="binding site" evidence="1">
    <location>
        <position position="110"/>
    </location>
    <ligand>
        <name>substrate</name>
    </ligand>
</feature>
<feature type="site" description="Transition state stabilizer" evidence="1">
    <location>
        <position position="17"/>
    </location>
</feature>
<protein>
    <recommendedName>
        <fullName evidence="1">3-dehydroquinate dehydratase</fullName>
        <shortName evidence="1">3-dehydroquinase</shortName>
        <ecNumber evidence="1">4.2.1.10</ecNumber>
    </recommendedName>
    <alternativeName>
        <fullName evidence="1">Type II DHQase</fullName>
    </alternativeName>
</protein>
<proteinExistence type="inferred from homology"/>
<gene>
    <name evidence="1" type="primary">aroQ</name>
    <name type="ordered locus">MAB_2840c</name>
</gene>
<keyword id="KW-0028">Amino-acid biosynthesis</keyword>
<keyword id="KW-0057">Aromatic amino acid biosynthesis</keyword>
<keyword id="KW-0456">Lyase</keyword>
<keyword id="KW-1185">Reference proteome</keyword>
<organism>
    <name type="scientific">Mycobacteroides abscessus (strain ATCC 19977 / DSM 44196 / CCUG 20993 / CIP 104536 / JCM 13569 / NCTC 13031 / TMC 1543 / L948)</name>
    <name type="common">Mycobacterium abscessus</name>
    <dbReference type="NCBI Taxonomy" id="561007"/>
    <lineage>
        <taxon>Bacteria</taxon>
        <taxon>Bacillati</taxon>
        <taxon>Actinomycetota</taxon>
        <taxon>Actinomycetes</taxon>
        <taxon>Mycobacteriales</taxon>
        <taxon>Mycobacteriaceae</taxon>
        <taxon>Mycobacteroides</taxon>
        <taxon>Mycobacteroides abscessus</taxon>
    </lineage>
</organism>
<name>AROQ_MYCA9</name>
<evidence type="ECO:0000255" key="1">
    <source>
        <dbReference type="HAMAP-Rule" id="MF_00169"/>
    </source>
</evidence>
<accession>B1MCE8</accession>
<sequence>MTIQVLNGPNLGRLGKREAAVYGSVTYAELVSLIEAEAAVLGVDVQVRQSDSEAELLGWVHDAADAKDPVILNAGAFTHTSVALRDACAELSAGLIEVHISNVHAREEFRHHSYLSALATGVIVGLGVQGYLLALRYFVASASS</sequence>